<dbReference type="EC" id="2.7.13.3"/>
<dbReference type="EMBL" id="AB024561">
    <property type="protein sequence ID" value="BAA83946.1"/>
    <property type="molecule type" value="Genomic_DNA"/>
</dbReference>
<dbReference type="EMBL" id="BA000004">
    <property type="protein sequence ID" value="BAB07558.1"/>
    <property type="molecule type" value="Genomic_DNA"/>
</dbReference>
<dbReference type="PIR" id="G84129">
    <property type="entry name" value="G84129"/>
</dbReference>
<dbReference type="RefSeq" id="WP_010899964.1">
    <property type="nucleotide sequence ID" value="NC_002570.2"/>
</dbReference>
<dbReference type="STRING" id="272558.gene:10729752"/>
<dbReference type="KEGG" id="bha:BH3839"/>
<dbReference type="eggNOG" id="COG3290">
    <property type="taxonomic scope" value="Bacteria"/>
</dbReference>
<dbReference type="HOGENOM" id="CLU_020211_11_2_9"/>
<dbReference type="OrthoDB" id="9792686at2"/>
<dbReference type="BRENDA" id="2.7.13.3">
    <property type="organism ID" value="661"/>
</dbReference>
<dbReference type="Proteomes" id="UP000001258">
    <property type="component" value="Chromosome"/>
</dbReference>
<dbReference type="GO" id="GO:0005886">
    <property type="term" value="C:plasma membrane"/>
    <property type="evidence" value="ECO:0007669"/>
    <property type="project" value="UniProtKB-SubCell"/>
</dbReference>
<dbReference type="GO" id="GO:0005524">
    <property type="term" value="F:ATP binding"/>
    <property type="evidence" value="ECO:0007669"/>
    <property type="project" value="UniProtKB-KW"/>
</dbReference>
<dbReference type="GO" id="GO:0000155">
    <property type="term" value="F:phosphorelay sensor kinase activity"/>
    <property type="evidence" value="ECO:0007669"/>
    <property type="project" value="InterPro"/>
</dbReference>
<dbReference type="GO" id="GO:0006355">
    <property type="term" value="P:regulation of DNA-templated transcription"/>
    <property type="evidence" value="ECO:0007669"/>
    <property type="project" value="InterPro"/>
</dbReference>
<dbReference type="CDD" id="cd16915">
    <property type="entry name" value="HATPase_DpiB-CitA-like"/>
    <property type="match status" value="1"/>
</dbReference>
<dbReference type="CDD" id="cd00130">
    <property type="entry name" value="PAS"/>
    <property type="match status" value="1"/>
</dbReference>
<dbReference type="CDD" id="cd18773">
    <property type="entry name" value="PDC1_HK_sensor"/>
    <property type="match status" value="1"/>
</dbReference>
<dbReference type="FunFam" id="3.30.450.20:FF:000018">
    <property type="entry name" value="Sensor histidine kinase DcuS"/>
    <property type="match status" value="1"/>
</dbReference>
<dbReference type="Gene3D" id="1.10.287.130">
    <property type="match status" value="1"/>
</dbReference>
<dbReference type="Gene3D" id="3.30.565.10">
    <property type="entry name" value="Histidine kinase-like ATPase, C-terminal domain"/>
    <property type="match status" value="1"/>
</dbReference>
<dbReference type="Gene3D" id="3.30.450.20">
    <property type="entry name" value="PAS domain"/>
    <property type="match status" value="2"/>
</dbReference>
<dbReference type="InterPro" id="IPR036890">
    <property type="entry name" value="HATPase_C_sf"/>
</dbReference>
<dbReference type="InterPro" id="IPR005467">
    <property type="entry name" value="His_kinase_dom"/>
</dbReference>
<dbReference type="InterPro" id="IPR000014">
    <property type="entry name" value="PAS"/>
</dbReference>
<dbReference type="InterPro" id="IPR035965">
    <property type="entry name" value="PAS-like_dom_sf"/>
</dbReference>
<dbReference type="InterPro" id="IPR013767">
    <property type="entry name" value="PAS_fold"/>
</dbReference>
<dbReference type="InterPro" id="IPR033463">
    <property type="entry name" value="sCache_3"/>
</dbReference>
<dbReference type="InterPro" id="IPR029151">
    <property type="entry name" value="Sensor-like_sf"/>
</dbReference>
<dbReference type="InterPro" id="IPR004358">
    <property type="entry name" value="Sig_transdc_His_kin-like_C"/>
</dbReference>
<dbReference type="InterPro" id="IPR016120">
    <property type="entry name" value="Sig_transdc_His_kin_SpoOB"/>
</dbReference>
<dbReference type="InterPro" id="IPR039506">
    <property type="entry name" value="SPOB_a"/>
</dbReference>
<dbReference type="PANTHER" id="PTHR43547:SF3">
    <property type="entry name" value="SENSOR PROTEIN CITS"/>
    <property type="match status" value="1"/>
</dbReference>
<dbReference type="PANTHER" id="PTHR43547">
    <property type="entry name" value="TWO-COMPONENT HISTIDINE KINASE"/>
    <property type="match status" value="1"/>
</dbReference>
<dbReference type="Pfam" id="PF02518">
    <property type="entry name" value="HATPase_c"/>
    <property type="match status" value="1"/>
</dbReference>
<dbReference type="Pfam" id="PF00989">
    <property type="entry name" value="PAS"/>
    <property type="match status" value="1"/>
</dbReference>
<dbReference type="Pfam" id="PF17203">
    <property type="entry name" value="sCache_3_2"/>
    <property type="match status" value="1"/>
</dbReference>
<dbReference type="Pfam" id="PF14689">
    <property type="entry name" value="SPOB_a"/>
    <property type="match status" value="1"/>
</dbReference>
<dbReference type="PRINTS" id="PR00344">
    <property type="entry name" value="BCTRLSENSOR"/>
</dbReference>
<dbReference type="SMART" id="SM00387">
    <property type="entry name" value="HATPase_c"/>
    <property type="match status" value="1"/>
</dbReference>
<dbReference type="SMART" id="SM00091">
    <property type="entry name" value="PAS"/>
    <property type="match status" value="1"/>
</dbReference>
<dbReference type="SUPFAM" id="SSF55874">
    <property type="entry name" value="ATPase domain of HSP90 chaperone/DNA topoisomerase II/histidine kinase"/>
    <property type="match status" value="1"/>
</dbReference>
<dbReference type="SUPFAM" id="SSF55785">
    <property type="entry name" value="PYP-like sensor domain (PAS domain)"/>
    <property type="match status" value="1"/>
</dbReference>
<dbReference type="SUPFAM" id="SSF103190">
    <property type="entry name" value="Sensory domain-like"/>
    <property type="match status" value="1"/>
</dbReference>
<dbReference type="SUPFAM" id="SSF55890">
    <property type="entry name" value="Sporulation response regulatory protein Spo0B"/>
    <property type="match status" value="1"/>
</dbReference>
<dbReference type="PROSITE" id="PS50109">
    <property type="entry name" value="HIS_KIN"/>
    <property type="match status" value="1"/>
</dbReference>
<name>CITS_HALH5</name>
<keyword id="KW-0067">ATP-binding</keyword>
<keyword id="KW-1003">Cell membrane</keyword>
<keyword id="KW-0418">Kinase</keyword>
<keyword id="KW-0472">Membrane</keyword>
<keyword id="KW-0547">Nucleotide-binding</keyword>
<keyword id="KW-0597">Phosphoprotein</keyword>
<keyword id="KW-1185">Reference proteome</keyword>
<keyword id="KW-0808">Transferase</keyword>
<keyword id="KW-0812">Transmembrane</keyword>
<keyword id="KW-1133">Transmembrane helix</keyword>
<keyword id="KW-0902">Two-component regulatory system</keyword>
<organism>
    <name type="scientific">Halalkalibacterium halodurans (strain ATCC BAA-125 / DSM 18197 / FERM 7344 / JCM 9153 / C-125)</name>
    <name type="common">Bacillus halodurans</name>
    <dbReference type="NCBI Taxonomy" id="272558"/>
    <lineage>
        <taxon>Bacteria</taxon>
        <taxon>Bacillati</taxon>
        <taxon>Bacillota</taxon>
        <taxon>Bacilli</taxon>
        <taxon>Bacillales</taxon>
        <taxon>Bacillaceae</taxon>
        <taxon>Halalkalibacterium (ex Joshi et al. 2022)</taxon>
    </lineage>
</organism>
<protein>
    <recommendedName>
        <fullName>Sensor protein CitS</fullName>
        <ecNumber>2.7.13.3</ecNumber>
    </recommendedName>
</protein>
<feature type="chain" id="PRO_0000074734" description="Sensor protein CitS">
    <location>
        <begin position="1"/>
        <end position="538"/>
    </location>
</feature>
<feature type="topological domain" description="Cytoplasmic" evidence="2">
    <location>
        <begin position="1"/>
        <end position="13"/>
    </location>
</feature>
<feature type="transmembrane region" description="Helical" evidence="2">
    <location>
        <begin position="14"/>
        <end position="34"/>
    </location>
</feature>
<feature type="topological domain" description="Extracellular" evidence="2">
    <location>
        <begin position="35"/>
        <end position="174"/>
    </location>
</feature>
<feature type="transmembrane region" description="Helical" evidence="2">
    <location>
        <begin position="175"/>
        <end position="195"/>
    </location>
</feature>
<feature type="topological domain" description="Cytoplasmic" evidence="2">
    <location>
        <begin position="196"/>
        <end position="538"/>
    </location>
</feature>
<feature type="domain" description="PAS">
    <location>
        <begin position="216"/>
        <end position="282"/>
    </location>
</feature>
<feature type="domain" description="Histidine kinase" evidence="3">
    <location>
        <begin position="339"/>
        <end position="534"/>
    </location>
</feature>
<feature type="modified residue" description="Phosphohistidine; by autocatalysis" evidence="3">
    <location>
        <position position="342"/>
    </location>
</feature>
<comment type="function">
    <text evidence="1">Member of the two-component regulatory system CitT/CitS. Functions probably as a membrane-associated protein kinase that phosphorylates CitT in response to environmental citrate or Mg(2+)-citrate complex (By similarity).</text>
</comment>
<comment type="catalytic activity">
    <reaction>
        <text>ATP + protein L-histidine = ADP + protein N-phospho-L-histidine.</text>
        <dbReference type="EC" id="2.7.13.3"/>
    </reaction>
</comment>
<comment type="subcellular location">
    <subcellularLocation>
        <location evidence="4">Cell membrane</location>
        <topology evidence="4">Multi-pass membrane protein</topology>
    </subcellularLocation>
</comment>
<accession>Q9RC53</accession>
<proteinExistence type="inferred from homology"/>
<evidence type="ECO:0000250" key="1"/>
<evidence type="ECO:0000255" key="2"/>
<evidence type="ECO:0000255" key="3">
    <source>
        <dbReference type="PROSITE-ProRule" id="PRU00107"/>
    </source>
</evidence>
<evidence type="ECO:0000305" key="4"/>
<sequence length="538" mass="59814">MKRRLFPLTFSAKMMGFIALLIIAMFVLLGVFLNEQYARTLEEQMGERALSVAQAVALIPELREAFSAERPDEIIQPIAESIRVETGAEFIVVGNTDLIRYAHPLPERIGQRMVGGDNERALVHGESYVSKAVGSLGPSIRGKVPVFDDNGKIIGIVSVGFLMEDIQQVIGERLIAMWQIVVVIMILGLMGTWLVANTVKKATLGLEPEEIGQQFQQKEAILQSIHEGVIAVNKEGKVTLFNQAAMKYVDPELDKEDVLGRHVTDLVKHTRLPEVLQVGKGQYDQELRIGDKQAVVNRVPIYYDHEIVGAVATFRDRNEIKKLSEELTNVKNYADALRAQTHEFSNKLNTISGFLQLGKIDEAVDFIQKERKIQQEWIHFFIERVNDPTVSAVLLGKISQAQELGIDVDIDPSSQLLTPLQERQQELLVTMIGNLLENAFDALLASGIENKKIYISFTDMGDDFIFEVEDNGPGIPPQLMESIFEEGFSTKEGTHRGFGLALVKKAVHELGGAIFLEEGELGGACFVLTIPKHEAKEG</sequence>
<gene>
    <name type="primary">citS</name>
    <name type="ordered locus">BH3839</name>
</gene>
<reference key="1">
    <citation type="journal article" date="1999" name="Extremophiles">
        <title>Genetic analysis of the chromosome of alkaliphilic Bacillus halodurans C-125.</title>
        <authorList>
            <person name="Takami H."/>
            <person name="Takaki Y."/>
            <person name="Nakasone K."/>
            <person name="Sakiyama T."/>
            <person name="Maeno G."/>
            <person name="Sasaki R."/>
            <person name="Hirama C."/>
            <person name="Fuji F."/>
            <person name="Masui N."/>
        </authorList>
    </citation>
    <scope>NUCLEOTIDE SEQUENCE [GENOMIC DNA]</scope>
    <source>
        <strain>ATCC BAA-125 / DSM 18197 / FERM 7344 / JCM 9153 / C-125</strain>
    </source>
</reference>
<reference key="2">
    <citation type="journal article" date="2000" name="Nucleic Acids Res.">
        <title>Complete genome sequence of the alkaliphilic bacterium Bacillus halodurans and genomic sequence comparison with Bacillus subtilis.</title>
        <authorList>
            <person name="Takami H."/>
            <person name="Nakasone K."/>
            <person name="Takaki Y."/>
            <person name="Maeno G."/>
            <person name="Sasaki R."/>
            <person name="Masui N."/>
            <person name="Fuji F."/>
            <person name="Hirama C."/>
            <person name="Nakamura Y."/>
            <person name="Ogasawara N."/>
            <person name="Kuhara S."/>
            <person name="Horikoshi K."/>
        </authorList>
    </citation>
    <scope>NUCLEOTIDE SEQUENCE [LARGE SCALE GENOMIC DNA]</scope>
    <source>
        <strain>ATCC BAA-125 / DSM 18197 / FERM 7344 / JCM 9153 / C-125</strain>
    </source>
</reference>